<feature type="chain" id="PRO_0000344873" description="Ribonuclease Y">
    <location>
        <begin position="1"/>
        <end position="513"/>
    </location>
</feature>
<feature type="transmembrane region" description="Helical" evidence="1">
    <location>
        <begin position="4"/>
        <end position="24"/>
    </location>
</feature>
<feature type="domain" description="KH" evidence="1">
    <location>
        <begin position="203"/>
        <end position="288"/>
    </location>
</feature>
<feature type="domain" description="HD" evidence="2">
    <location>
        <begin position="329"/>
        <end position="422"/>
    </location>
</feature>
<feature type="region of interest" description="Disordered" evidence="3">
    <location>
        <begin position="78"/>
        <end position="106"/>
    </location>
</feature>
<dbReference type="EC" id="3.1.-.-" evidence="1"/>
<dbReference type="EMBL" id="AP008971">
    <property type="protein sequence ID" value="BAG08170.1"/>
    <property type="molecule type" value="Genomic_DNA"/>
</dbReference>
<dbReference type="RefSeq" id="WP_012290605.1">
    <property type="nucleotide sequence ID" value="NC_010376.1"/>
</dbReference>
<dbReference type="SMR" id="B0S1D0"/>
<dbReference type="STRING" id="334413.FMG_0752"/>
<dbReference type="KEGG" id="fma:FMG_0752"/>
<dbReference type="eggNOG" id="COG1418">
    <property type="taxonomic scope" value="Bacteria"/>
</dbReference>
<dbReference type="HOGENOM" id="CLU_028328_1_0_9"/>
<dbReference type="Proteomes" id="UP000001319">
    <property type="component" value="Chromosome"/>
</dbReference>
<dbReference type="GO" id="GO:0005886">
    <property type="term" value="C:plasma membrane"/>
    <property type="evidence" value="ECO:0007669"/>
    <property type="project" value="UniProtKB-SubCell"/>
</dbReference>
<dbReference type="GO" id="GO:0003723">
    <property type="term" value="F:RNA binding"/>
    <property type="evidence" value="ECO:0007669"/>
    <property type="project" value="UniProtKB-UniRule"/>
</dbReference>
<dbReference type="GO" id="GO:0004521">
    <property type="term" value="F:RNA endonuclease activity"/>
    <property type="evidence" value="ECO:0007669"/>
    <property type="project" value="UniProtKB-UniRule"/>
</dbReference>
<dbReference type="GO" id="GO:0006402">
    <property type="term" value="P:mRNA catabolic process"/>
    <property type="evidence" value="ECO:0007669"/>
    <property type="project" value="UniProtKB-UniRule"/>
</dbReference>
<dbReference type="CDD" id="cd00077">
    <property type="entry name" value="HDc"/>
    <property type="match status" value="1"/>
</dbReference>
<dbReference type="CDD" id="cd22431">
    <property type="entry name" value="KH-I_RNaseY"/>
    <property type="match status" value="1"/>
</dbReference>
<dbReference type="FunFam" id="1.10.3210.10:FF:000003">
    <property type="entry name" value="Ribonuclease Y"/>
    <property type="match status" value="1"/>
</dbReference>
<dbReference type="FunFam" id="3.30.1370.10:FF:000006">
    <property type="entry name" value="Ribonuclease Y"/>
    <property type="match status" value="1"/>
</dbReference>
<dbReference type="Gene3D" id="1.10.3210.10">
    <property type="entry name" value="Hypothetical protein af1432"/>
    <property type="match status" value="1"/>
</dbReference>
<dbReference type="Gene3D" id="3.30.1370.10">
    <property type="entry name" value="K Homology domain, type 1"/>
    <property type="match status" value="1"/>
</dbReference>
<dbReference type="HAMAP" id="MF_00335">
    <property type="entry name" value="RNase_Y"/>
    <property type="match status" value="1"/>
</dbReference>
<dbReference type="InterPro" id="IPR003607">
    <property type="entry name" value="HD/PDEase_dom"/>
</dbReference>
<dbReference type="InterPro" id="IPR006674">
    <property type="entry name" value="HD_domain"/>
</dbReference>
<dbReference type="InterPro" id="IPR006675">
    <property type="entry name" value="HDIG_dom"/>
</dbReference>
<dbReference type="InterPro" id="IPR004087">
    <property type="entry name" value="KH_dom"/>
</dbReference>
<dbReference type="InterPro" id="IPR004088">
    <property type="entry name" value="KH_dom_type_1"/>
</dbReference>
<dbReference type="InterPro" id="IPR036612">
    <property type="entry name" value="KH_dom_type_1_sf"/>
</dbReference>
<dbReference type="InterPro" id="IPR017705">
    <property type="entry name" value="Ribonuclease_Y"/>
</dbReference>
<dbReference type="InterPro" id="IPR022711">
    <property type="entry name" value="RNase_Y_N"/>
</dbReference>
<dbReference type="NCBIfam" id="TIGR00277">
    <property type="entry name" value="HDIG"/>
    <property type="match status" value="1"/>
</dbReference>
<dbReference type="NCBIfam" id="TIGR03319">
    <property type="entry name" value="RNase_Y"/>
    <property type="match status" value="1"/>
</dbReference>
<dbReference type="PANTHER" id="PTHR12826">
    <property type="entry name" value="RIBONUCLEASE Y"/>
    <property type="match status" value="1"/>
</dbReference>
<dbReference type="PANTHER" id="PTHR12826:SF15">
    <property type="entry name" value="RIBONUCLEASE Y"/>
    <property type="match status" value="1"/>
</dbReference>
<dbReference type="Pfam" id="PF01966">
    <property type="entry name" value="HD"/>
    <property type="match status" value="1"/>
</dbReference>
<dbReference type="Pfam" id="PF00013">
    <property type="entry name" value="KH_1"/>
    <property type="match status" value="1"/>
</dbReference>
<dbReference type="Pfam" id="PF12072">
    <property type="entry name" value="RNase_Y_N"/>
    <property type="match status" value="1"/>
</dbReference>
<dbReference type="SMART" id="SM00471">
    <property type="entry name" value="HDc"/>
    <property type="match status" value="1"/>
</dbReference>
<dbReference type="SMART" id="SM00322">
    <property type="entry name" value="KH"/>
    <property type="match status" value="1"/>
</dbReference>
<dbReference type="SUPFAM" id="SSF54791">
    <property type="entry name" value="Eukaryotic type KH-domain (KH-domain type I)"/>
    <property type="match status" value="1"/>
</dbReference>
<dbReference type="SUPFAM" id="SSF109604">
    <property type="entry name" value="HD-domain/PDEase-like"/>
    <property type="match status" value="1"/>
</dbReference>
<dbReference type="PROSITE" id="PS51831">
    <property type="entry name" value="HD"/>
    <property type="match status" value="1"/>
</dbReference>
<dbReference type="PROSITE" id="PS50084">
    <property type="entry name" value="KH_TYPE_1"/>
    <property type="match status" value="1"/>
</dbReference>
<accession>B0S1D0</accession>
<evidence type="ECO:0000255" key="1">
    <source>
        <dbReference type="HAMAP-Rule" id="MF_00335"/>
    </source>
</evidence>
<evidence type="ECO:0000255" key="2">
    <source>
        <dbReference type="PROSITE-ProRule" id="PRU01175"/>
    </source>
</evidence>
<evidence type="ECO:0000256" key="3">
    <source>
        <dbReference type="SAM" id="MobiDB-lite"/>
    </source>
</evidence>
<proteinExistence type="inferred from homology"/>
<keyword id="KW-1003">Cell membrane</keyword>
<keyword id="KW-0255">Endonuclease</keyword>
<keyword id="KW-0378">Hydrolase</keyword>
<keyword id="KW-0472">Membrane</keyword>
<keyword id="KW-0540">Nuclease</keyword>
<keyword id="KW-1185">Reference proteome</keyword>
<keyword id="KW-0694">RNA-binding</keyword>
<keyword id="KW-0812">Transmembrane</keyword>
<keyword id="KW-1133">Transmembrane helix</keyword>
<comment type="function">
    <text evidence="1">Endoribonuclease that initiates mRNA decay.</text>
</comment>
<comment type="subcellular location">
    <subcellularLocation>
        <location evidence="1">Cell membrane</location>
        <topology evidence="1">Single-pass membrane protein</topology>
    </subcellularLocation>
</comment>
<comment type="similarity">
    <text evidence="1">Belongs to the RNase Y family.</text>
</comment>
<gene>
    <name evidence="1" type="primary">rny</name>
    <name type="ordered locus">FMG_0752</name>
</gene>
<organism>
    <name type="scientific">Finegoldia magna (strain ATCC 29328 / DSM 20472 / WAL 2508)</name>
    <name type="common">Peptostreptococcus magnus</name>
    <dbReference type="NCBI Taxonomy" id="334413"/>
    <lineage>
        <taxon>Bacteria</taxon>
        <taxon>Bacillati</taxon>
        <taxon>Bacillota</taxon>
        <taxon>Tissierellia</taxon>
        <taxon>Tissierellales</taxon>
        <taxon>Peptoniphilaceae</taxon>
        <taxon>Finegoldia</taxon>
    </lineage>
</organism>
<sequence>MSTTTSLIIAILAGILGIVIGFFFRKSLAEKKIRSAEDYAVKIIEDANKDAETKKKELLVEAKDEIFKMKSDLDRENKSRLKEISRQEDRLNSKEENLERKNASLEKKHKKLDSELKKADDMQLKIQSLIDEKELELEKVAGLTSDEAKNIVLERVKTETIREQAAIIKEIESKTKEESEKFAREIISTSIQRYAADQVAESTVSVVNLPNDDMKGRIIGREGRNIRAFETLTGVDLIIDDTPEAVVLSAFDPVRREIARIALEKLIVDGRIHPTRIEEMVEKARKDVDNTIREKGEEACDETNVHGLHPELIKILGKLHYRTSYGQNVLKHSIEVSNIAGMLASELGVNVKLAKRGGLLHDLGKAIDHEIEGPHVELGVNAAKRFKEPKDVINCIEAHHGDVEPTCIESILVQSADAISAARPGARRESMENYIQRLENLEQIANSFDGIESSYAIQAGREIRIMVKPDVIDESSMVILAKDVAHKIESELEYPGQIKVNVIRENRVSDYAK</sequence>
<name>RNY_FINM2</name>
<reference key="1">
    <citation type="journal article" date="2008" name="DNA Res.">
        <title>Complete genome sequence of Finegoldia magna, an anaerobic opportunistic pathogen.</title>
        <authorList>
            <person name="Goto T."/>
            <person name="Yamashita A."/>
            <person name="Hirakawa H."/>
            <person name="Matsutani M."/>
            <person name="Todo K."/>
            <person name="Ohshima K."/>
            <person name="Toh H."/>
            <person name="Miyamoto K."/>
            <person name="Kuhara S."/>
            <person name="Hattori M."/>
            <person name="Shimizu T."/>
            <person name="Akimoto S."/>
        </authorList>
    </citation>
    <scope>NUCLEOTIDE SEQUENCE [LARGE SCALE GENOMIC DNA]</scope>
    <source>
        <strain>ATCC 29328 / DSM 20472 / WAL 2508</strain>
    </source>
</reference>
<protein>
    <recommendedName>
        <fullName evidence="1">Ribonuclease Y</fullName>
        <shortName evidence="1">RNase Y</shortName>
        <ecNumber evidence="1">3.1.-.-</ecNumber>
    </recommendedName>
</protein>